<gene>
    <name evidence="1" type="primary">rsmH</name>
    <name type="synonym">mraW</name>
    <name type="ordered locus">CLK_0935</name>
</gene>
<name>RSMH_CLOBM</name>
<reference key="1">
    <citation type="journal article" date="2007" name="PLoS ONE">
        <title>Analysis of the neurotoxin complex genes in Clostridium botulinum A1-A4 and B1 strains: BoNT/A3, /Ba4 and /B1 clusters are located within plasmids.</title>
        <authorList>
            <person name="Smith T.J."/>
            <person name="Hill K.K."/>
            <person name="Foley B.T."/>
            <person name="Detter J.C."/>
            <person name="Munk A.C."/>
            <person name="Bruce D.C."/>
            <person name="Doggett N.A."/>
            <person name="Smith L.A."/>
            <person name="Marks J.D."/>
            <person name="Xie G."/>
            <person name="Brettin T.S."/>
        </authorList>
    </citation>
    <scope>NUCLEOTIDE SEQUENCE [LARGE SCALE GENOMIC DNA]</scope>
    <source>
        <strain>Loch Maree / Type A3</strain>
    </source>
</reference>
<organism>
    <name type="scientific">Clostridium botulinum (strain Loch Maree / Type A3)</name>
    <dbReference type="NCBI Taxonomy" id="498214"/>
    <lineage>
        <taxon>Bacteria</taxon>
        <taxon>Bacillati</taxon>
        <taxon>Bacillota</taxon>
        <taxon>Clostridia</taxon>
        <taxon>Eubacteriales</taxon>
        <taxon>Clostridiaceae</taxon>
        <taxon>Clostridium</taxon>
    </lineage>
</organism>
<keyword id="KW-0963">Cytoplasm</keyword>
<keyword id="KW-0489">Methyltransferase</keyword>
<keyword id="KW-0698">rRNA processing</keyword>
<keyword id="KW-0949">S-adenosyl-L-methionine</keyword>
<keyword id="KW-0808">Transferase</keyword>
<dbReference type="EC" id="2.1.1.199" evidence="1"/>
<dbReference type="EMBL" id="CP000962">
    <property type="protein sequence ID" value="ACA54936.1"/>
    <property type="molecule type" value="Genomic_DNA"/>
</dbReference>
<dbReference type="RefSeq" id="WP_012342976.1">
    <property type="nucleotide sequence ID" value="NC_010520.1"/>
</dbReference>
<dbReference type="SMR" id="B1L164"/>
<dbReference type="KEGG" id="cbl:CLK_0935"/>
<dbReference type="HOGENOM" id="CLU_038422_2_0_9"/>
<dbReference type="GO" id="GO:0005737">
    <property type="term" value="C:cytoplasm"/>
    <property type="evidence" value="ECO:0007669"/>
    <property type="project" value="UniProtKB-SubCell"/>
</dbReference>
<dbReference type="GO" id="GO:0071424">
    <property type="term" value="F:rRNA (cytosine-N4-)-methyltransferase activity"/>
    <property type="evidence" value="ECO:0007669"/>
    <property type="project" value="UniProtKB-UniRule"/>
</dbReference>
<dbReference type="GO" id="GO:0070475">
    <property type="term" value="P:rRNA base methylation"/>
    <property type="evidence" value="ECO:0007669"/>
    <property type="project" value="UniProtKB-UniRule"/>
</dbReference>
<dbReference type="FunFam" id="1.10.150.170:FF:000001">
    <property type="entry name" value="Ribosomal RNA small subunit methyltransferase H"/>
    <property type="match status" value="1"/>
</dbReference>
<dbReference type="Gene3D" id="1.10.150.170">
    <property type="entry name" value="Putative methyltransferase TM0872, insert domain"/>
    <property type="match status" value="1"/>
</dbReference>
<dbReference type="Gene3D" id="3.40.50.150">
    <property type="entry name" value="Vaccinia Virus protein VP39"/>
    <property type="match status" value="1"/>
</dbReference>
<dbReference type="HAMAP" id="MF_01007">
    <property type="entry name" value="16SrRNA_methyltr_H"/>
    <property type="match status" value="1"/>
</dbReference>
<dbReference type="InterPro" id="IPR002903">
    <property type="entry name" value="RsmH"/>
</dbReference>
<dbReference type="InterPro" id="IPR023397">
    <property type="entry name" value="SAM-dep_MeTrfase_MraW_recog"/>
</dbReference>
<dbReference type="InterPro" id="IPR029063">
    <property type="entry name" value="SAM-dependent_MTases_sf"/>
</dbReference>
<dbReference type="NCBIfam" id="TIGR00006">
    <property type="entry name" value="16S rRNA (cytosine(1402)-N(4))-methyltransferase RsmH"/>
    <property type="match status" value="1"/>
</dbReference>
<dbReference type="PANTHER" id="PTHR11265:SF0">
    <property type="entry name" value="12S RRNA N4-METHYLCYTIDINE METHYLTRANSFERASE"/>
    <property type="match status" value="1"/>
</dbReference>
<dbReference type="PANTHER" id="PTHR11265">
    <property type="entry name" value="S-ADENOSYL-METHYLTRANSFERASE MRAW"/>
    <property type="match status" value="1"/>
</dbReference>
<dbReference type="Pfam" id="PF01795">
    <property type="entry name" value="Methyltransf_5"/>
    <property type="match status" value="1"/>
</dbReference>
<dbReference type="PIRSF" id="PIRSF004486">
    <property type="entry name" value="MraW"/>
    <property type="match status" value="1"/>
</dbReference>
<dbReference type="SUPFAM" id="SSF81799">
    <property type="entry name" value="Putative methyltransferase TM0872, insert domain"/>
    <property type="match status" value="1"/>
</dbReference>
<dbReference type="SUPFAM" id="SSF53335">
    <property type="entry name" value="S-adenosyl-L-methionine-dependent methyltransferases"/>
    <property type="match status" value="1"/>
</dbReference>
<feature type="chain" id="PRO_0000386817" description="Ribosomal RNA small subunit methyltransferase H">
    <location>
        <begin position="1"/>
        <end position="309"/>
    </location>
</feature>
<feature type="binding site" evidence="1">
    <location>
        <begin position="33"/>
        <end position="35"/>
    </location>
    <ligand>
        <name>S-adenosyl-L-methionine</name>
        <dbReference type="ChEBI" id="CHEBI:59789"/>
    </ligand>
</feature>
<feature type="binding site" evidence="1">
    <location>
        <position position="53"/>
    </location>
    <ligand>
        <name>S-adenosyl-L-methionine</name>
        <dbReference type="ChEBI" id="CHEBI:59789"/>
    </ligand>
</feature>
<feature type="binding site" evidence="1">
    <location>
        <position position="79"/>
    </location>
    <ligand>
        <name>S-adenosyl-L-methionine</name>
        <dbReference type="ChEBI" id="CHEBI:59789"/>
    </ligand>
</feature>
<feature type="binding site" evidence="1">
    <location>
        <position position="100"/>
    </location>
    <ligand>
        <name>S-adenosyl-L-methionine</name>
        <dbReference type="ChEBI" id="CHEBI:59789"/>
    </ligand>
</feature>
<feature type="binding site" evidence="1">
    <location>
        <position position="107"/>
    </location>
    <ligand>
        <name>S-adenosyl-L-methionine</name>
        <dbReference type="ChEBI" id="CHEBI:59789"/>
    </ligand>
</feature>
<evidence type="ECO:0000255" key="1">
    <source>
        <dbReference type="HAMAP-Rule" id="MF_01007"/>
    </source>
</evidence>
<accession>B1L164</accession>
<proteinExistence type="inferred from homology"/>
<comment type="function">
    <text evidence="1">Specifically methylates the N4 position of cytidine in position 1402 (C1402) of 16S rRNA.</text>
</comment>
<comment type="catalytic activity">
    <reaction evidence="1">
        <text>cytidine(1402) in 16S rRNA + S-adenosyl-L-methionine = N(4)-methylcytidine(1402) in 16S rRNA + S-adenosyl-L-homocysteine + H(+)</text>
        <dbReference type="Rhea" id="RHEA:42928"/>
        <dbReference type="Rhea" id="RHEA-COMP:10286"/>
        <dbReference type="Rhea" id="RHEA-COMP:10287"/>
        <dbReference type="ChEBI" id="CHEBI:15378"/>
        <dbReference type="ChEBI" id="CHEBI:57856"/>
        <dbReference type="ChEBI" id="CHEBI:59789"/>
        <dbReference type="ChEBI" id="CHEBI:74506"/>
        <dbReference type="ChEBI" id="CHEBI:82748"/>
        <dbReference type="EC" id="2.1.1.199"/>
    </reaction>
</comment>
<comment type="subcellular location">
    <subcellularLocation>
        <location evidence="1">Cytoplasm</location>
    </subcellularLocation>
</comment>
<comment type="similarity">
    <text evidence="1">Belongs to the methyltransferase superfamily. RsmH family.</text>
</comment>
<sequence>MEFKHISVLLEETIDSLNIKEDGVYVDCTLGGGGHSKEILKKLSHKGKLIGIDQDTSAIKAAKERLKDYENVIYVHNNFYNIDSILEELDIDKVDGIIMDLGVSSYQLDEASRGFSYMKDAPLDMRMNREENFSAYNVVNSYEEEELFRIFKNYGEEKFSRKIARFIVEKRTENPIETTGELVEIIRKAIPAKFQREGHPAKRTFQAIRIEVNKELQILNKAIEDSVNRLNKDGRLSIITFHSLEDRIVKVKFKELEKPCTCPPSFPICVCGKEPQIKIITKKPIEPSKEEKEINSRSRSAKLRVCRKI</sequence>
<protein>
    <recommendedName>
        <fullName evidence="1">Ribosomal RNA small subunit methyltransferase H</fullName>
        <ecNumber evidence="1">2.1.1.199</ecNumber>
    </recommendedName>
    <alternativeName>
        <fullName evidence="1">16S rRNA m(4)C1402 methyltransferase</fullName>
    </alternativeName>
    <alternativeName>
        <fullName evidence="1">rRNA (cytosine-N(4)-)-methyltransferase RsmH</fullName>
    </alternativeName>
</protein>